<gene>
    <name evidence="9 11" type="primary">Fn3k</name>
</gene>
<keyword id="KW-0007">Acetylation</keyword>
<keyword id="KW-0067">ATP-binding</keyword>
<keyword id="KW-0418">Kinase</keyword>
<keyword id="KW-0547">Nucleotide-binding</keyword>
<keyword id="KW-1185">Reference proteome</keyword>
<keyword id="KW-0808">Transferase</keyword>
<name>FN3K_MOUSE</name>
<comment type="function">
    <text evidence="2 4 6 7 8">Fructosamine-3-kinase involved in protein deglycation by mediating phosphorylation of fructoselysine residues on glycated proteins, to generate fructoselysine-3 phosphate (PubMed:11016445, PubMed:16819943). Fructoselysine-3 phosphate adducts are unstable and decompose under physiological conditions (By similarity). Involved in intracellular deglycation in erythrocytes and pancreatic islets (PubMed:16819943, PubMed:20009024). Involved in the response to oxidative stress by mediating deglycation of NFE2L2/NRF2, glycation impairing NFE2L2/NRF2 function (PubMed:31398338). Also able to phosphorylate psicosamines and ribulosamines (By similarity).</text>
</comment>
<comment type="catalytic activity">
    <reaction evidence="4">
        <text>N(6)-(D-fructosyl)-L-lysyl-[protein] + ATP = N(6)-(3-O-phospho-D-fructosyl)-L-lysyl-[protein] + ADP + H(+)</text>
        <dbReference type="Rhea" id="RHEA:59832"/>
        <dbReference type="Rhea" id="RHEA-COMP:15451"/>
        <dbReference type="Rhea" id="RHEA-COMP:15452"/>
        <dbReference type="ChEBI" id="CHEBI:15378"/>
        <dbReference type="ChEBI" id="CHEBI:30616"/>
        <dbReference type="ChEBI" id="CHEBI:143253"/>
        <dbReference type="ChEBI" id="CHEBI:143254"/>
        <dbReference type="ChEBI" id="CHEBI:456216"/>
        <dbReference type="EC" id="2.7.1.171"/>
    </reaction>
    <physiologicalReaction direction="left-to-right" evidence="4">
        <dbReference type="Rhea" id="RHEA:59833"/>
    </physiologicalReaction>
</comment>
<comment type="catalytic activity">
    <reaction evidence="2">
        <text>N(6)-D-ribulosyl-L-lysyl-[protein] + ATP = N(6)-(3-O-phospho-D-ribulosyl)-L-lysyl-[protein] + ADP + H(+)</text>
        <dbReference type="Rhea" id="RHEA:48432"/>
        <dbReference type="Rhea" id="RHEA-COMP:12103"/>
        <dbReference type="Rhea" id="RHEA-COMP:12104"/>
        <dbReference type="ChEBI" id="CHEBI:15378"/>
        <dbReference type="ChEBI" id="CHEBI:30616"/>
        <dbReference type="ChEBI" id="CHEBI:90418"/>
        <dbReference type="ChEBI" id="CHEBI:90420"/>
        <dbReference type="ChEBI" id="CHEBI:456216"/>
        <dbReference type="EC" id="2.7.1.172"/>
    </reaction>
    <physiologicalReaction direction="left-to-right" evidence="2">
        <dbReference type="Rhea" id="RHEA:48433"/>
    </physiologicalReaction>
</comment>
<comment type="catalytic activity">
    <reaction evidence="2">
        <text>N(6)-(D-psicosyl)-L-lysyl-[protein] + ATP = N(6)-(3-O-phospho-D-psicosyl)-L-lysyl-[protein] + ADP + H(+)</text>
        <dbReference type="Rhea" id="RHEA:61392"/>
        <dbReference type="Rhea" id="RHEA-COMP:15796"/>
        <dbReference type="Rhea" id="RHEA-COMP:15797"/>
        <dbReference type="ChEBI" id="CHEBI:15378"/>
        <dbReference type="ChEBI" id="CHEBI:30616"/>
        <dbReference type="ChEBI" id="CHEBI:144621"/>
        <dbReference type="ChEBI" id="CHEBI:144622"/>
        <dbReference type="ChEBI" id="CHEBI:456216"/>
    </reaction>
    <physiologicalReaction direction="left-to-right" evidence="2">
        <dbReference type="Rhea" id="RHEA:61393"/>
    </physiologicalReaction>
</comment>
<comment type="subunit">
    <text evidence="2">Monomer.</text>
</comment>
<comment type="tissue specificity">
    <text evidence="5">Expressed in red blood cells, brain, heart, kidney and muscle (PubMed:15331600). Lower expression is observed in liver (PubMed:15331600). Not expressed in lung, spleen, testis and thymus (PubMed:15331600).</text>
</comment>
<comment type="disruption phenotype">
    <text evidence="6 7">Mice are viable and healthy and show normal blood glucose and serum fructosamine levels (PubMed:16819943). They however display increased protein glycation levels in cells such as erythrocytes and pancreatic islets (PubMed:16819943, PubMed:20009024). Increased levels of protein glycation levels do not affect the maintenance and function of pancreatic islets (PubMed:20009024).</text>
</comment>
<comment type="similarity">
    <text evidence="10">Belongs to the fructosamine kinase family.</text>
</comment>
<comment type="sequence caution" evidence="10">
    <conflict type="frameshift">
        <sequence resource="EMBL" id="AK010151"/>
    </conflict>
</comment>
<proteinExistence type="evidence at protein level"/>
<accession>Q9ER35</accession>
<accession>Q9D6N6</accession>
<dbReference type="EC" id="2.7.1.171" evidence="4"/>
<dbReference type="EC" id="2.7.1.172" evidence="2"/>
<dbReference type="EMBL" id="AJ404616">
    <property type="protein sequence ID" value="CAC16407.1"/>
    <property type="molecule type" value="mRNA"/>
</dbReference>
<dbReference type="EMBL" id="AK010151">
    <property type="status" value="NOT_ANNOTATED_CDS"/>
    <property type="molecule type" value="mRNA"/>
</dbReference>
<dbReference type="CCDS" id="CCDS25776.1"/>
<dbReference type="RefSeq" id="NP_071297.1">
    <property type="nucleotide sequence ID" value="NM_022014.4"/>
</dbReference>
<dbReference type="SMR" id="Q9ER35"/>
<dbReference type="BioGRID" id="210990">
    <property type="interactions" value="2"/>
</dbReference>
<dbReference type="FunCoup" id="Q9ER35">
    <property type="interactions" value="528"/>
</dbReference>
<dbReference type="IntAct" id="Q9ER35">
    <property type="interactions" value="1"/>
</dbReference>
<dbReference type="STRING" id="10090.ENSMUSP00000026175"/>
<dbReference type="iPTMnet" id="Q9ER35"/>
<dbReference type="PhosphoSitePlus" id="Q9ER35"/>
<dbReference type="SwissPalm" id="Q9ER35"/>
<dbReference type="jPOST" id="Q9ER35"/>
<dbReference type="PaxDb" id="10090-ENSMUSP00000026175"/>
<dbReference type="ProteomicsDB" id="271703"/>
<dbReference type="Antibodypedia" id="33043">
    <property type="antibodies" value="175 antibodies from 26 providers"/>
</dbReference>
<dbReference type="DNASU" id="63828"/>
<dbReference type="Ensembl" id="ENSMUST00000026175.9">
    <property type="protein sequence ID" value="ENSMUSP00000026175.3"/>
    <property type="gene ID" value="ENSMUSG00000025175.13"/>
</dbReference>
<dbReference type="GeneID" id="63828"/>
<dbReference type="KEGG" id="mmu:63828"/>
<dbReference type="UCSC" id="uc007mvx.2">
    <property type="organism name" value="mouse"/>
</dbReference>
<dbReference type="AGR" id="MGI:1926834"/>
<dbReference type="CTD" id="64122"/>
<dbReference type="MGI" id="MGI:1926834">
    <property type="gene designation" value="Fn3k"/>
</dbReference>
<dbReference type="VEuPathDB" id="HostDB:ENSMUSG00000025175"/>
<dbReference type="eggNOG" id="KOG3021">
    <property type="taxonomic scope" value="Eukaryota"/>
</dbReference>
<dbReference type="GeneTree" id="ENSGT00390000005730"/>
<dbReference type="HOGENOM" id="CLU_036517_0_1_1"/>
<dbReference type="InParanoid" id="Q9ER35"/>
<dbReference type="OMA" id="CNRFGDE"/>
<dbReference type="OrthoDB" id="5772781at2759"/>
<dbReference type="PhylomeDB" id="Q9ER35"/>
<dbReference type="TreeFam" id="TF313452"/>
<dbReference type="BRENDA" id="2.7.1.171">
    <property type="organism ID" value="3474"/>
</dbReference>
<dbReference type="Reactome" id="R-MMU-163841">
    <property type="pathway name" value="Gamma carboxylation, hypusinylation, hydroxylation, and arylsulfatase activation"/>
</dbReference>
<dbReference type="BioGRID-ORCS" id="63828">
    <property type="hits" value="1 hit in 78 CRISPR screens"/>
</dbReference>
<dbReference type="PRO" id="PR:Q9ER35"/>
<dbReference type="Proteomes" id="UP000000589">
    <property type="component" value="Chromosome 11"/>
</dbReference>
<dbReference type="RNAct" id="Q9ER35">
    <property type="molecule type" value="protein"/>
</dbReference>
<dbReference type="Bgee" id="ENSMUSG00000025175">
    <property type="expression patterns" value="Expressed in interventricular septum and 146 other cell types or tissues"/>
</dbReference>
<dbReference type="ExpressionAtlas" id="Q9ER35">
    <property type="expression patterns" value="baseline and differential"/>
</dbReference>
<dbReference type="GO" id="GO:0005829">
    <property type="term" value="C:cytosol"/>
    <property type="evidence" value="ECO:0000315"/>
    <property type="project" value="MGI"/>
</dbReference>
<dbReference type="GO" id="GO:0005739">
    <property type="term" value="C:mitochondrion"/>
    <property type="evidence" value="ECO:0007669"/>
    <property type="project" value="Ensembl"/>
</dbReference>
<dbReference type="GO" id="GO:0005524">
    <property type="term" value="F:ATP binding"/>
    <property type="evidence" value="ECO:0007669"/>
    <property type="project" value="UniProtKB-KW"/>
</dbReference>
<dbReference type="GO" id="GO:0102194">
    <property type="term" value="F:protein-fructosamine 3-kinase activity"/>
    <property type="evidence" value="ECO:0000314"/>
    <property type="project" value="MGI"/>
</dbReference>
<dbReference type="GO" id="GO:0102193">
    <property type="term" value="F:protein-ribulosamine 3-kinase activity"/>
    <property type="evidence" value="ECO:0007669"/>
    <property type="project" value="UniProtKB-EC"/>
</dbReference>
<dbReference type="GO" id="GO:0030855">
    <property type="term" value="P:epithelial cell differentiation"/>
    <property type="evidence" value="ECO:0007669"/>
    <property type="project" value="Ensembl"/>
</dbReference>
<dbReference type="GO" id="GO:0030389">
    <property type="term" value="P:fructosamine metabolic process"/>
    <property type="evidence" value="ECO:0000314"/>
    <property type="project" value="MGI"/>
</dbReference>
<dbReference type="GO" id="GO:0036525">
    <property type="term" value="P:protein deglycation"/>
    <property type="evidence" value="ECO:0000315"/>
    <property type="project" value="UniProtKB"/>
</dbReference>
<dbReference type="FunFam" id="3.90.1200.10:FF:000003">
    <property type="entry name" value="fructosamine-3-kinase isoform X1"/>
    <property type="match status" value="1"/>
</dbReference>
<dbReference type="FunFam" id="3.30.200.20:FF:000264">
    <property type="entry name" value="Protein-ribulosamine 3-kinase, chloroplastic"/>
    <property type="match status" value="1"/>
</dbReference>
<dbReference type="Gene3D" id="3.90.1200.10">
    <property type="match status" value="1"/>
</dbReference>
<dbReference type="Gene3D" id="3.30.200.20">
    <property type="entry name" value="Phosphorylase Kinase, domain 1"/>
    <property type="match status" value="1"/>
</dbReference>
<dbReference type="InterPro" id="IPR016477">
    <property type="entry name" value="Fructo-/Ketosamine-3-kinase"/>
</dbReference>
<dbReference type="InterPro" id="IPR011009">
    <property type="entry name" value="Kinase-like_dom_sf"/>
</dbReference>
<dbReference type="PANTHER" id="PTHR12149">
    <property type="entry name" value="FRUCTOSAMINE 3 KINASE-RELATED PROTEIN"/>
    <property type="match status" value="1"/>
</dbReference>
<dbReference type="PANTHER" id="PTHR12149:SF9">
    <property type="entry name" value="FRUCTOSAMINE-3-KINASE"/>
    <property type="match status" value="1"/>
</dbReference>
<dbReference type="Pfam" id="PF03881">
    <property type="entry name" value="Fructosamin_kin"/>
    <property type="match status" value="1"/>
</dbReference>
<dbReference type="PIRSF" id="PIRSF006221">
    <property type="entry name" value="Ketosamine-3-kinase"/>
    <property type="match status" value="1"/>
</dbReference>
<dbReference type="SUPFAM" id="SSF56112">
    <property type="entry name" value="Protein kinase-like (PK-like)"/>
    <property type="match status" value="1"/>
</dbReference>
<protein>
    <recommendedName>
        <fullName evidence="9">Fructosamine-3-kinase</fullName>
        <ecNumber evidence="4">2.7.1.171</ecNumber>
    </recommendedName>
    <alternativeName>
        <fullName evidence="10">Protein-psicosamine 3-kinase FN3K</fullName>
    </alternativeName>
    <alternativeName>
        <fullName evidence="10">Protein-ribulosamine 3-kinase FN3K</fullName>
        <ecNumber evidence="2">2.7.1.172</ecNumber>
    </alternativeName>
</protein>
<feature type="chain" id="PRO_0000216338" description="Fructosamine-3-kinase">
    <location>
        <begin position="1"/>
        <end position="309"/>
    </location>
</feature>
<feature type="active site" description="Proton acceptor" evidence="1">
    <location>
        <position position="217"/>
    </location>
</feature>
<feature type="binding site" evidence="3">
    <location>
        <begin position="89"/>
        <end position="91"/>
    </location>
    <ligand>
        <name>ATP</name>
        <dbReference type="ChEBI" id="CHEBI:30616"/>
    </ligand>
</feature>
<feature type="modified residue" description="N-acetylmethionine" evidence="2">
    <location>
        <position position="1"/>
    </location>
</feature>
<evidence type="ECO:0000250" key="1">
    <source>
        <dbReference type="UniProtKB" id="P9WI99"/>
    </source>
</evidence>
<evidence type="ECO:0000250" key="2">
    <source>
        <dbReference type="UniProtKB" id="Q9H479"/>
    </source>
</evidence>
<evidence type="ECO:0000250" key="3">
    <source>
        <dbReference type="UniProtKB" id="Q9HA64"/>
    </source>
</evidence>
<evidence type="ECO:0000269" key="4">
    <source>
    </source>
</evidence>
<evidence type="ECO:0000269" key="5">
    <source>
    </source>
</evidence>
<evidence type="ECO:0000269" key="6">
    <source>
    </source>
</evidence>
<evidence type="ECO:0000269" key="7">
    <source>
    </source>
</evidence>
<evidence type="ECO:0000269" key="8">
    <source>
    </source>
</evidence>
<evidence type="ECO:0000303" key="9">
    <source>
    </source>
</evidence>
<evidence type="ECO:0000305" key="10"/>
<evidence type="ECO:0000312" key="11">
    <source>
        <dbReference type="MGI" id="MGI:1926834"/>
    </source>
</evidence>
<sequence length="309" mass="35032">MEQLLRAQLHTTTLRAFGSSGGGCISEGYAYYTDSGPVFVKVNRRTQARQMFEGEMASLEALRNTGLVRVPKPMKVIDLPGGGAVFVMEHLKMKSLSSQASKLGEQMADLHLYNQKLREKSKTRQNTVGCGAEGAEPQGVTKFGFHTVTCCGFIPQVNEWQEDWPTFFTRHRLQAQLDLIEKDYADRETQELWSRLQVKIPDLFAGIEIVPALLHGDLWSGNVAEDDQGPVIYDPASFYGHSEFELAIASMFGGFPRSFFTAYHRKIPKAPGFDKRLLLYQLFNYLNHWNHFGREYRSPSLGVMRKLLR</sequence>
<organism>
    <name type="scientific">Mus musculus</name>
    <name type="common">Mouse</name>
    <dbReference type="NCBI Taxonomy" id="10090"/>
    <lineage>
        <taxon>Eukaryota</taxon>
        <taxon>Metazoa</taxon>
        <taxon>Chordata</taxon>
        <taxon>Craniata</taxon>
        <taxon>Vertebrata</taxon>
        <taxon>Euteleostomi</taxon>
        <taxon>Mammalia</taxon>
        <taxon>Eutheria</taxon>
        <taxon>Euarchontoglires</taxon>
        <taxon>Glires</taxon>
        <taxon>Rodentia</taxon>
        <taxon>Myomorpha</taxon>
        <taxon>Muroidea</taxon>
        <taxon>Muridae</taxon>
        <taxon>Murinae</taxon>
        <taxon>Mus</taxon>
        <taxon>Mus</taxon>
    </lineage>
</organism>
<reference key="1">
    <citation type="journal article" date="2000" name="Diabetes">
        <title>Identification, cloning, and heterologous expression of a mammalian fructosamine-3-kinase.</title>
        <authorList>
            <person name="Delpierre G."/>
            <person name="Rider M.H."/>
            <person name="Collard F."/>
            <person name="Stroobant V."/>
            <person name="Vanstapel F."/>
            <person name="Santos H."/>
            <person name="Van Schaftingen E."/>
        </authorList>
    </citation>
    <scope>NUCLEOTIDE SEQUENCE [MRNA]</scope>
    <scope>FUNCTION</scope>
    <scope>CATALYTIC ACTIVITY</scope>
    <source>
        <tissue>Kidney</tissue>
    </source>
</reference>
<reference key="2">
    <citation type="journal article" date="2005" name="Science">
        <title>The transcriptional landscape of the mammalian genome.</title>
        <authorList>
            <person name="Carninci P."/>
            <person name="Kasukawa T."/>
            <person name="Katayama S."/>
            <person name="Gough J."/>
            <person name="Frith M.C."/>
            <person name="Maeda N."/>
            <person name="Oyama R."/>
            <person name="Ravasi T."/>
            <person name="Lenhard B."/>
            <person name="Wells C."/>
            <person name="Kodzius R."/>
            <person name="Shimokawa K."/>
            <person name="Bajic V.B."/>
            <person name="Brenner S.E."/>
            <person name="Batalov S."/>
            <person name="Forrest A.R."/>
            <person name="Zavolan M."/>
            <person name="Davis M.J."/>
            <person name="Wilming L.G."/>
            <person name="Aidinis V."/>
            <person name="Allen J.E."/>
            <person name="Ambesi-Impiombato A."/>
            <person name="Apweiler R."/>
            <person name="Aturaliya R.N."/>
            <person name="Bailey T.L."/>
            <person name="Bansal M."/>
            <person name="Baxter L."/>
            <person name="Beisel K.W."/>
            <person name="Bersano T."/>
            <person name="Bono H."/>
            <person name="Chalk A.M."/>
            <person name="Chiu K.P."/>
            <person name="Choudhary V."/>
            <person name="Christoffels A."/>
            <person name="Clutterbuck D.R."/>
            <person name="Crowe M.L."/>
            <person name="Dalla E."/>
            <person name="Dalrymple B.P."/>
            <person name="de Bono B."/>
            <person name="Della Gatta G."/>
            <person name="di Bernardo D."/>
            <person name="Down T."/>
            <person name="Engstrom P."/>
            <person name="Fagiolini M."/>
            <person name="Faulkner G."/>
            <person name="Fletcher C.F."/>
            <person name="Fukushima T."/>
            <person name="Furuno M."/>
            <person name="Futaki S."/>
            <person name="Gariboldi M."/>
            <person name="Georgii-Hemming P."/>
            <person name="Gingeras T.R."/>
            <person name="Gojobori T."/>
            <person name="Green R.E."/>
            <person name="Gustincich S."/>
            <person name="Harbers M."/>
            <person name="Hayashi Y."/>
            <person name="Hensch T.K."/>
            <person name="Hirokawa N."/>
            <person name="Hill D."/>
            <person name="Huminiecki L."/>
            <person name="Iacono M."/>
            <person name="Ikeo K."/>
            <person name="Iwama A."/>
            <person name="Ishikawa T."/>
            <person name="Jakt M."/>
            <person name="Kanapin A."/>
            <person name="Katoh M."/>
            <person name="Kawasawa Y."/>
            <person name="Kelso J."/>
            <person name="Kitamura H."/>
            <person name="Kitano H."/>
            <person name="Kollias G."/>
            <person name="Krishnan S.P."/>
            <person name="Kruger A."/>
            <person name="Kummerfeld S.K."/>
            <person name="Kurochkin I.V."/>
            <person name="Lareau L.F."/>
            <person name="Lazarevic D."/>
            <person name="Lipovich L."/>
            <person name="Liu J."/>
            <person name="Liuni S."/>
            <person name="McWilliam S."/>
            <person name="Madan Babu M."/>
            <person name="Madera M."/>
            <person name="Marchionni L."/>
            <person name="Matsuda H."/>
            <person name="Matsuzawa S."/>
            <person name="Miki H."/>
            <person name="Mignone F."/>
            <person name="Miyake S."/>
            <person name="Morris K."/>
            <person name="Mottagui-Tabar S."/>
            <person name="Mulder N."/>
            <person name="Nakano N."/>
            <person name="Nakauchi H."/>
            <person name="Ng P."/>
            <person name="Nilsson R."/>
            <person name="Nishiguchi S."/>
            <person name="Nishikawa S."/>
            <person name="Nori F."/>
            <person name="Ohara O."/>
            <person name="Okazaki Y."/>
            <person name="Orlando V."/>
            <person name="Pang K.C."/>
            <person name="Pavan W.J."/>
            <person name="Pavesi G."/>
            <person name="Pesole G."/>
            <person name="Petrovsky N."/>
            <person name="Piazza S."/>
            <person name="Reed J."/>
            <person name="Reid J.F."/>
            <person name="Ring B.Z."/>
            <person name="Ringwald M."/>
            <person name="Rost B."/>
            <person name="Ruan Y."/>
            <person name="Salzberg S.L."/>
            <person name="Sandelin A."/>
            <person name="Schneider C."/>
            <person name="Schoenbach C."/>
            <person name="Sekiguchi K."/>
            <person name="Semple C.A."/>
            <person name="Seno S."/>
            <person name="Sessa L."/>
            <person name="Sheng Y."/>
            <person name="Shibata Y."/>
            <person name="Shimada H."/>
            <person name="Shimada K."/>
            <person name="Silva D."/>
            <person name="Sinclair B."/>
            <person name="Sperling S."/>
            <person name="Stupka E."/>
            <person name="Sugiura K."/>
            <person name="Sultana R."/>
            <person name="Takenaka Y."/>
            <person name="Taki K."/>
            <person name="Tammoja K."/>
            <person name="Tan S.L."/>
            <person name="Tang S."/>
            <person name="Taylor M.S."/>
            <person name="Tegner J."/>
            <person name="Teichmann S.A."/>
            <person name="Ueda H.R."/>
            <person name="van Nimwegen E."/>
            <person name="Verardo R."/>
            <person name="Wei C.L."/>
            <person name="Yagi K."/>
            <person name="Yamanishi H."/>
            <person name="Zabarovsky E."/>
            <person name="Zhu S."/>
            <person name="Zimmer A."/>
            <person name="Hide W."/>
            <person name="Bult C."/>
            <person name="Grimmond S.M."/>
            <person name="Teasdale R.D."/>
            <person name="Liu E.T."/>
            <person name="Brusic V."/>
            <person name="Quackenbush J."/>
            <person name="Wahlestedt C."/>
            <person name="Mattick J.S."/>
            <person name="Hume D.A."/>
            <person name="Kai C."/>
            <person name="Sasaki D."/>
            <person name="Tomaru Y."/>
            <person name="Fukuda S."/>
            <person name="Kanamori-Katayama M."/>
            <person name="Suzuki M."/>
            <person name="Aoki J."/>
            <person name="Arakawa T."/>
            <person name="Iida J."/>
            <person name="Imamura K."/>
            <person name="Itoh M."/>
            <person name="Kato T."/>
            <person name="Kawaji H."/>
            <person name="Kawagashira N."/>
            <person name="Kawashima T."/>
            <person name="Kojima M."/>
            <person name="Kondo S."/>
            <person name="Konno H."/>
            <person name="Nakano K."/>
            <person name="Ninomiya N."/>
            <person name="Nishio T."/>
            <person name="Okada M."/>
            <person name="Plessy C."/>
            <person name="Shibata K."/>
            <person name="Shiraki T."/>
            <person name="Suzuki S."/>
            <person name="Tagami M."/>
            <person name="Waki K."/>
            <person name="Watahiki A."/>
            <person name="Okamura-Oho Y."/>
            <person name="Suzuki H."/>
            <person name="Kawai J."/>
            <person name="Hayashizaki Y."/>
        </authorList>
    </citation>
    <scope>NUCLEOTIDE SEQUENCE [LARGE SCALE MRNA]</scope>
    <source>
        <strain>C57BL/6J</strain>
        <tissue>Tongue</tissue>
    </source>
</reference>
<reference key="3">
    <citation type="journal article" date="2004" name="J. Biol. Chem.">
        <title>Tissue distribution and evolution of fructosamine 3-kinase and fructosamine 3-kinase-related protein.</title>
        <authorList>
            <person name="Delplanque J."/>
            <person name="Delpierre G."/>
            <person name="Opperdoes F.R."/>
            <person name="Van Schaftingen E."/>
        </authorList>
    </citation>
    <scope>TISSUE SPECIFICITY</scope>
</reference>
<reference key="4">
    <citation type="journal article" date="2006" name="Biochem. J.">
        <title>Increased protein glycation in fructosamine 3-kinase-deficient mice.</title>
        <authorList>
            <person name="Veiga da-Cunha M."/>
            <person name="Jacquemin P."/>
            <person name="Delpierre G."/>
            <person name="Godfraind C."/>
            <person name="Theate I."/>
            <person name="Vertommen D."/>
            <person name="Clotman F."/>
            <person name="Lemaigre F."/>
            <person name="Devuyst O."/>
            <person name="Van Schaftingen E."/>
        </authorList>
    </citation>
    <scope>FUNCTION</scope>
    <scope>DISRUPTION PHENOTYPE</scope>
</reference>
<reference key="5">
    <citation type="journal article" date="2010" name="Cell">
        <title>A tissue-specific atlas of mouse protein phosphorylation and expression.</title>
        <authorList>
            <person name="Huttlin E.L."/>
            <person name="Jedrychowski M.P."/>
            <person name="Elias J.E."/>
            <person name="Goswami T."/>
            <person name="Rad R."/>
            <person name="Beausoleil S.A."/>
            <person name="Villen J."/>
            <person name="Haas W."/>
            <person name="Sowa M.E."/>
            <person name="Gygi S.P."/>
        </authorList>
    </citation>
    <scope>IDENTIFICATION BY MASS SPECTROMETRY [LARGE SCALE ANALYSIS]</scope>
    <source>
        <tissue>Brain</tissue>
        <tissue>Brown adipose tissue</tissue>
        <tissue>Heart</tissue>
        <tissue>Kidney</tissue>
        <tissue>Liver</tissue>
        <tissue>Lung</tissue>
        <tissue>Spleen</tissue>
    </source>
</reference>
<reference key="6">
    <citation type="journal article" date="2010" name="Am. J. Physiol.">
        <title>Effects of fructosamine-3-kinase deficiency on function and survival of mouse pancreatic islets after prolonged culture in high glucose or ribose concentrations.</title>
        <authorList>
            <person name="Pascal S.M."/>
            <person name="Veiga-da-Cunha M."/>
            <person name="Gilon P."/>
            <person name="Van Schaftingen E."/>
            <person name="Jonas J.C."/>
        </authorList>
    </citation>
    <scope>DISRUPTION PHENOTYPE</scope>
</reference>
<reference key="7">
    <citation type="journal article" date="2019" name="Cell">
        <title>The oncogenic action of NRF2 depends on de-glycation by fructosamine-3-kinase.</title>
        <authorList>
            <person name="Sanghvi V.R."/>
            <person name="Leibold J."/>
            <person name="Mina M."/>
            <person name="Mohan P."/>
            <person name="Berishaj M."/>
            <person name="Li Z."/>
            <person name="Miele M.M."/>
            <person name="Lailler N."/>
            <person name="Zhao C."/>
            <person name="de Stanchina E."/>
            <person name="Viale A."/>
            <person name="Akkari L."/>
            <person name="Lowe S.W."/>
            <person name="Ciriello G."/>
            <person name="Hendrickson R.C."/>
            <person name="Wendel H.G."/>
        </authorList>
    </citation>
    <scope>FUNCTION</scope>
</reference>